<protein>
    <recommendedName>
        <fullName evidence="1">Deoxyuridine 5'-triphosphate nucleotidohydrolase</fullName>
        <shortName evidence="1">dUTPase</shortName>
        <ecNumber evidence="1">3.6.1.23</ecNumber>
    </recommendedName>
    <alternativeName>
        <fullName evidence="1">dUTP pyrophosphatase</fullName>
    </alternativeName>
</protein>
<comment type="function">
    <text evidence="1">This enzyme is involved in nucleotide metabolism: it produces dUMP, the immediate precursor of thymidine nucleotides and it decreases the intracellular concentration of dUTP so that uracil cannot be incorporated into DNA.</text>
</comment>
<comment type="catalytic activity">
    <reaction evidence="1">
        <text>dUTP + H2O = dUMP + diphosphate + H(+)</text>
        <dbReference type="Rhea" id="RHEA:10248"/>
        <dbReference type="ChEBI" id="CHEBI:15377"/>
        <dbReference type="ChEBI" id="CHEBI:15378"/>
        <dbReference type="ChEBI" id="CHEBI:33019"/>
        <dbReference type="ChEBI" id="CHEBI:61555"/>
        <dbReference type="ChEBI" id="CHEBI:246422"/>
        <dbReference type="EC" id="3.6.1.23"/>
    </reaction>
</comment>
<comment type="cofactor">
    <cofactor evidence="1">
        <name>Mg(2+)</name>
        <dbReference type="ChEBI" id="CHEBI:18420"/>
    </cofactor>
</comment>
<comment type="pathway">
    <text evidence="1">Pyrimidine metabolism; dUMP biosynthesis; dUMP from dCTP (dUTP route): step 2/2.</text>
</comment>
<comment type="similarity">
    <text evidence="1">Belongs to the dUTPase family.</text>
</comment>
<dbReference type="EC" id="3.6.1.23" evidence="1"/>
<dbReference type="EMBL" id="CP001025">
    <property type="protein sequence ID" value="ACB64911.1"/>
    <property type="molecule type" value="Genomic_DNA"/>
</dbReference>
<dbReference type="RefSeq" id="WP_012364518.1">
    <property type="nucleotide sequence ID" value="NC_010551.1"/>
</dbReference>
<dbReference type="SMR" id="B1YVA7"/>
<dbReference type="KEGG" id="bac:BamMC406_2433"/>
<dbReference type="HOGENOM" id="CLU_068508_1_1_4"/>
<dbReference type="OrthoDB" id="9809956at2"/>
<dbReference type="UniPathway" id="UPA00610">
    <property type="reaction ID" value="UER00666"/>
</dbReference>
<dbReference type="Proteomes" id="UP000001680">
    <property type="component" value="Chromosome 1"/>
</dbReference>
<dbReference type="GO" id="GO:0004170">
    <property type="term" value="F:dUTP diphosphatase activity"/>
    <property type="evidence" value="ECO:0007669"/>
    <property type="project" value="UniProtKB-UniRule"/>
</dbReference>
<dbReference type="GO" id="GO:0000287">
    <property type="term" value="F:magnesium ion binding"/>
    <property type="evidence" value="ECO:0007669"/>
    <property type="project" value="UniProtKB-UniRule"/>
</dbReference>
<dbReference type="GO" id="GO:0006226">
    <property type="term" value="P:dUMP biosynthetic process"/>
    <property type="evidence" value="ECO:0007669"/>
    <property type="project" value="UniProtKB-UniRule"/>
</dbReference>
<dbReference type="GO" id="GO:0046081">
    <property type="term" value="P:dUTP catabolic process"/>
    <property type="evidence" value="ECO:0007669"/>
    <property type="project" value="InterPro"/>
</dbReference>
<dbReference type="CDD" id="cd07557">
    <property type="entry name" value="trimeric_dUTPase"/>
    <property type="match status" value="1"/>
</dbReference>
<dbReference type="FunFam" id="2.70.40.10:FF:000002">
    <property type="entry name" value="dUTP diphosphatase"/>
    <property type="match status" value="1"/>
</dbReference>
<dbReference type="Gene3D" id="2.70.40.10">
    <property type="match status" value="1"/>
</dbReference>
<dbReference type="HAMAP" id="MF_00116">
    <property type="entry name" value="dUTPase_bact"/>
    <property type="match status" value="1"/>
</dbReference>
<dbReference type="InterPro" id="IPR008181">
    <property type="entry name" value="dUTPase"/>
</dbReference>
<dbReference type="InterPro" id="IPR029054">
    <property type="entry name" value="dUTPase-like"/>
</dbReference>
<dbReference type="InterPro" id="IPR036157">
    <property type="entry name" value="dUTPase-like_sf"/>
</dbReference>
<dbReference type="InterPro" id="IPR033704">
    <property type="entry name" value="dUTPase_trimeric"/>
</dbReference>
<dbReference type="NCBIfam" id="TIGR00576">
    <property type="entry name" value="dut"/>
    <property type="match status" value="1"/>
</dbReference>
<dbReference type="NCBIfam" id="NF001862">
    <property type="entry name" value="PRK00601.1"/>
    <property type="match status" value="1"/>
</dbReference>
<dbReference type="PANTHER" id="PTHR11241">
    <property type="entry name" value="DEOXYURIDINE 5'-TRIPHOSPHATE NUCLEOTIDOHYDROLASE"/>
    <property type="match status" value="1"/>
</dbReference>
<dbReference type="PANTHER" id="PTHR11241:SF0">
    <property type="entry name" value="DEOXYURIDINE 5'-TRIPHOSPHATE NUCLEOTIDOHYDROLASE"/>
    <property type="match status" value="1"/>
</dbReference>
<dbReference type="Pfam" id="PF00692">
    <property type="entry name" value="dUTPase"/>
    <property type="match status" value="1"/>
</dbReference>
<dbReference type="SUPFAM" id="SSF51283">
    <property type="entry name" value="dUTPase-like"/>
    <property type="match status" value="1"/>
</dbReference>
<proteinExistence type="inferred from homology"/>
<reference key="1">
    <citation type="submission" date="2008-04" db="EMBL/GenBank/DDBJ databases">
        <title>Complete sequence of chromosome 1 of Burkholderia ambifaria MC40-6.</title>
        <authorList>
            <person name="Copeland A."/>
            <person name="Lucas S."/>
            <person name="Lapidus A."/>
            <person name="Glavina del Rio T."/>
            <person name="Dalin E."/>
            <person name="Tice H."/>
            <person name="Pitluck S."/>
            <person name="Chain P."/>
            <person name="Malfatti S."/>
            <person name="Shin M."/>
            <person name="Vergez L."/>
            <person name="Lang D."/>
            <person name="Schmutz J."/>
            <person name="Larimer F."/>
            <person name="Land M."/>
            <person name="Hauser L."/>
            <person name="Kyrpides N."/>
            <person name="Lykidis A."/>
            <person name="Ramette A."/>
            <person name="Konstantinidis K."/>
            <person name="Tiedje J."/>
            <person name="Richardson P."/>
        </authorList>
    </citation>
    <scope>NUCLEOTIDE SEQUENCE [LARGE SCALE GENOMIC DNA]</scope>
    <source>
        <strain>MC40-6</strain>
    </source>
</reference>
<keyword id="KW-0378">Hydrolase</keyword>
<keyword id="KW-0460">Magnesium</keyword>
<keyword id="KW-0479">Metal-binding</keyword>
<keyword id="KW-0546">Nucleotide metabolism</keyword>
<feature type="chain" id="PRO_1000094944" description="Deoxyuridine 5'-triphosphate nucleotidohydrolase">
    <location>
        <begin position="1"/>
        <end position="148"/>
    </location>
</feature>
<feature type="binding site" evidence="1">
    <location>
        <begin position="67"/>
        <end position="69"/>
    </location>
    <ligand>
        <name>substrate</name>
    </ligand>
</feature>
<feature type="binding site" evidence="1">
    <location>
        <position position="80"/>
    </location>
    <ligand>
        <name>substrate</name>
    </ligand>
</feature>
<feature type="binding site" evidence="1">
    <location>
        <begin position="84"/>
        <end position="86"/>
    </location>
    <ligand>
        <name>substrate</name>
    </ligand>
</feature>
<feature type="binding site" evidence="1">
    <location>
        <position position="94"/>
    </location>
    <ligand>
        <name>substrate</name>
    </ligand>
</feature>
<gene>
    <name evidence="1" type="primary">dut</name>
    <name type="ordered locus">BamMC406_2433</name>
</gene>
<accession>B1YVA7</accession>
<evidence type="ECO:0000255" key="1">
    <source>
        <dbReference type="HAMAP-Rule" id="MF_00116"/>
    </source>
</evidence>
<sequence length="148" mass="15930">MKLDLKILDARMRDYMPAYATTGSAGLDLRACLDAPVTLQPGETTLVPTGLAIHLADPGYAALILPRSGLGHKHGIVLGNLVGLIDSDYQGQLMVSTWNRGQTEFVLNPFERLAQLVIVPVVQAQFNIVDDFAQSERGEGGFGSTGRH</sequence>
<organism>
    <name type="scientific">Burkholderia ambifaria (strain MC40-6)</name>
    <dbReference type="NCBI Taxonomy" id="398577"/>
    <lineage>
        <taxon>Bacteria</taxon>
        <taxon>Pseudomonadati</taxon>
        <taxon>Pseudomonadota</taxon>
        <taxon>Betaproteobacteria</taxon>
        <taxon>Burkholderiales</taxon>
        <taxon>Burkholderiaceae</taxon>
        <taxon>Burkholderia</taxon>
        <taxon>Burkholderia cepacia complex</taxon>
    </lineage>
</organism>
<name>DUT_BURA4</name>